<evidence type="ECO:0000255" key="1">
    <source>
        <dbReference type="HAMAP-Rule" id="MF_01522"/>
    </source>
</evidence>
<accession>C3LVE6</accession>
<sequence>MKPAKQTTASLAFLAMGIVYGDIGTSPLYAFKEVFFSHHPLAINPDNVLGILSLVFWAFVLIVSIKYLLLVTRADQNGEGGILTLSAIAQQSAPKPWQRIAMLLGILATGFFFGEAVITPAMSVLSAVEGIAVAQPDLAPYVLPIAMMIIVALFAVQAMGTERIGRFFAPVMLLWFLVLALLGAHAIWHAPQVLRALNPAYAVHFVLLYGQHTLFILGLVVLSVTGVEALYADMGHFGIKPIRIAWFALVMPSLLLNYFGQGAYLLTLSAPTGSTFFSLAPKAWLWPLILLATFATVIASQAVISGIFSLARQAINYGYLPPMKIAHTSEHSQGQIYVPAANMLLFVAVIFVMLRFRSSANLAAAYGIAVTAIMMISSLLLVLVARYQWQWRWPRVVTIGIVFIGMDSLLLASTSTKLMEGGWLPLLLGCVVFIVMYIWQQQRQRLLEIAGNELSVSAMIQSLEEESFQRAAGTAVYLSRSLNHVPRSLLHNIKYNKTLHERNVLMTFQYEAVPRVHPCRRAEIEQVSASFWQVVIHIGYQEEPDMAQVMHCCGLKGLYLHPNETLFLLSSERLKVQKLGMWHDLKVWFFIQMSKHALRTSERLNIPPDRLIEMGVYREM</sequence>
<name>KUP_VIBCM</name>
<protein>
    <recommendedName>
        <fullName evidence="1">Probable potassium transport system protein Kup</fullName>
    </recommendedName>
</protein>
<proteinExistence type="inferred from homology"/>
<gene>
    <name evidence="1" type="primary">kup</name>
    <name type="ordered locus">VCM66_A0488</name>
</gene>
<dbReference type="EMBL" id="CP001234">
    <property type="protein sequence ID" value="ACP07451.1"/>
    <property type="molecule type" value="Genomic_DNA"/>
</dbReference>
<dbReference type="RefSeq" id="WP_000801198.1">
    <property type="nucleotide sequence ID" value="NC_012580.1"/>
</dbReference>
<dbReference type="KEGG" id="vcm:VCM66_A0488"/>
<dbReference type="HOGENOM" id="CLU_008142_4_2_6"/>
<dbReference type="Proteomes" id="UP000001217">
    <property type="component" value="Chromosome II"/>
</dbReference>
<dbReference type="GO" id="GO:0005886">
    <property type="term" value="C:plasma membrane"/>
    <property type="evidence" value="ECO:0007669"/>
    <property type="project" value="UniProtKB-SubCell"/>
</dbReference>
<dbReference type="GO" id="GO:0015079">
    <property type="term" value="F:potassium ion transmembrane transporter activity"/>
    <property type="evidence" value="ECO:0007669"/>
    <property type="project" value="UniProtKB-UniRule"/>
</dbReference>
<dbReference type="GO" id="GO:0015293">
    <property type="term" value="F:symporter activity"/>
    <property type="evidence" value="ECO:0007669"/>
    <property type="project" value="UniProtKB-UniRule"/>
</dbReference>
<dbReference type="HAMAP" id="MF_01522">
    <property type="entry name" value="Kup"/>
    <property type="match status" value="1"/>
</dbReference>
<dbReference type="InterPro" id="IPR003855">
    <property type="entry name" value="K+_transporter"/>
</dbReference>
<dbReference type="InterPro" id="IPR053952">
    <property type="entry name" value="K_trans_C"/>
</dbReference>
<dbReference type="InterPro" id="IPR053951">
    <property type="entry name" value="K_trans_N"/>
</dbReference>
<dbReference type="InterPro" id="IPR023051">
    <property type="entry name" value="Kup"/>
</dbReference>
<dbReference type="PANTHER" id="PTHR30540:SF79">
    <property type="entry name" value="LOW AFFINITY POTASSIUM TRANSPORT SYSTEM PROTEIN KUP"/>
    <property type="match status" value="1"/>
</dbReference>
<dbReference type="PANTHER" id="PTHR30540">
    <property type="entry name" value="OSMOTIC STRESS POTASSIUM TRANSPORTER"/>
    <property type="match status" value="1"/>
</dbReference>
<dbReference type="Pfam" id="PF02705">
    <property type="entry name" value="K_trans"/>
    <property type="match status" value="1"/>
</dbReference>
<dbReference type="Pfam" id="PF22776">
    <property type="entry name" value="K_trans_C"/>
    <property type="match status" value="1"/>
</dbReference>
<comment type="function">
    <text evidence="1">Transport of potassium into the cell. Likely operates as a K(+):H(+) symporter.</text>
</comment>
<comment type="catalytic activity">
    <reaction evidence="1">
        <text>K(+)(in) + H(+)(in) = K(+)(out) + H(+)(out)</text>
        <dbReference type="Rhea" id="RHEA:28490"/>
        <dbReference type="ChEBI" id="CHEBI:15378"/>
        <dbReference type="ChEBI" id="CHEBI:29103"/>
    </reaction>
    <physiologicalReaction direction="right-to-left" evidence="1">
        <dbReference type="Rhea" id="RHEA:28492"/>
    </physiologicalReaction>
</comment>
<comment type="subcellular location">
    <subcellularLocation>
        <location evidence="1">Cell inner membrane</location>
        <topology evidence="1">Multi-pass membrane protein</topology>
    </subcellularLocation>
</comment>
<comment type="similarity">
    <text evidence="1">Belongs to the HAK/KUP transporter (TC 2.A.72) family.</text>
</comment>
<feature type="chain" id="PRO_1000185121" description="Probable potassium transport system protein Kup">
    <location>
        <begin position="1"/>
        <end position="620"/>
    </location>
</feature>
<feature type="transmembrane region" description="Helical" evidence="1">
    <location>
        <begin position="11"/>
        <end position="31"/>
    </location>
</feature>
<feature type="transmembrane region" description="Helical" evidence="1">
    <location>
        <begin position="51"/>
        <end position="71"/>
    </location>
</feature>
<feature type="transmembrane region" description="Helical" evidence="1">
    <location>
        <begin position="100"/>
        <end position="120"/>
    </location>
</feature>
<feature type="transmembrane region" description="Helical" evidence="1">
    <location>
        <begin position="138"/>
        <end position="158"/>
    </location>
</feature>
<feature type="transmembrane region" description="Helical" evidence="1">
    <location>
        <begin position="167"/>
        <end position="187"/>
    </location>
</feature>
<feature type="transmembrane region" description="Helical" evidence="1">
    <location>
        <begin position="202"/>
        <end position="222"/>
    </location>
</feature>
<feature type="transmembrane region" description="Helical" evidence="1">
    <location>
        <begin position="246"/>
        <end position="266"/>
    </location>
</feature>
<feature type="transmembrane region" description="Helical" evidence="1">
    <location>
        <begin position="288"/>
        <end position="308"/>
    </location>
</feature>
<feature type="transmembrane region" description="Helical" evidence="1">
    <location>
        <begin position="334"/>
        <end position="354"/>
    </location>
</feature>
<feature type="transmembrane region" description="Helical" evidence="1">
    <location>
        <begin position="364"/>
        <end position="384"/>
    </location>
</feature>
<feature type="transmembrane region" description="Helical" evidence="1">
    <location>
        <begin position="396"/>
        <end position="416"/>
    </location>
</feature>
<feature type="transmembrane region" description="Helical" evidence="1">
    <location>
        <begin position="418"/>
        <end position="438"/>
    </location>
</feature>
<reference key="1">
    <citation type="journal article" date="2008" name="PLoS ONE">
        <title>A recalibrated molecular clock and independent origins for the cholera pandemic clones.</title>
        <authorList>
            <person name="Feng L."/>
            <person name="Reeves P.R."/>
            <person name="Lan R."/>
            <person name="Ren Y."/>
            <person name="Gao C."/>
            <person name="Zhou Z."/>
            <person name="Ren Y."/>
            <person name="Cheng J."/>
            <person name="Wang W."/>
            <person name="Wang J."/>
            <person name="Qian W."/>
            <person name="Li D."/>
            <person name="Wang L."/>
        </authorList>
    </citation>
    <scope>NUCLEOTIDE SEQUENCE [LARGE SCALE GENOMIC DNA]</scope>
    <source>
        <strain>M66-2</strain>
    </source>
</reference>
<organism>
    <name type="scientific">Vibrio cholerae serotype O1 (strain M66-2)</name>
    <dbReference type="NCBI Taxonomy" id="579112"/>
    <lineage>
        <taxon>Bacteria</taxon>
        <taxon>Pseudomonadati</taxon>
        <taxon>Pseudomonadota</taxon>
        <taxon>Gammaproteobacteria</taxon>
        <taxon>Vibrionales</taxon>
        <taxon>Vibrionaceae</taxon>
        <taxon>Vibrio</taxon>
    </lineage>
</organism>
<keyword id="KW-0997">Cell inner membrane</keyword>
<keyword id="KW-1003">Cell membrane</keyword>
<keyword id="KW-0406">Ion transport</keyword>
<keyword id="KW-0472">Membrane</keyword>
<keyword id="KW-0630">Potassium</keyword>
<keyword id="KW-0633">Potassium transport</keyword>
<keyword id="KW-0769">Symport</keyword>
<keyword id="KW-0812">Transmembrane</keyword>
<keyword id="KW-1133">Transmembrane helix</keyword>
<keyword id="KW-0813">Transport</keyword>